<dbReference type="EMBL" id="CP001251">
    <property type="protein sequence ID" value="ACK42271.1"/>
    <property type="molecule type" value="Genomic_DNA"/>
</dbReference>
<dbReference type="RefSeq" id="WP_012583355.1">
    <property type="nucleotide sequence ID" value="NC_011661.1"/>
</dbReference>
<dbReference type="RefSeq" id="YP_002352885.1">
    <property type="nucleotide sequence ID" value="NC_011661.1"/>
</dbReference>
<dbReference type="SMR" id="B8E1E3"/>
<dbReference type="FunCoup" id="B8E1E3">
    <property type="interactions" value="368"/>
</dbReference>
<dbReference type="STRING" id="515635.Dtur_0991"/>
<dbReference type="EnsemblBacteria" id="ACK42271">
    <property type="protein sequence ID" value="ACK42271"/>
    <property type="gene ID" value="Dtur_0991"/>
</dbReference>
<dbReference type="KEGG" id="dtu:Dtur_0991"/>
<dbReference type="PATRIC" id="fig|515635.4.peg.1028"/>
<dbReference type="eggNOG" id="COG0093">
    <property type="taxonomic scope" value="Bacteria"/>
</dbReference>
<dbReference type="HOGENOM" id="CLU_095071_2_1_0"/>
<dbReference type="InParanoid" id="B8E1E3"/>
<dbReference type="OrthoDB" id="9806379at2"/>
<dbReference type="Proteomes" id="UP000007719">
    <property type="component" value="Chromosome"/>
</dbReference>
<dbReference type="GO" id="GO:0022625">
    <property type="term" value="C:cytosolic large ribosomal subunit"/>
    <property type="evidence" value="ECO:0000318"/>
    <property type="project" value="GO_Central"/>
</dbReference>
<dbReference type="GO" id="GO:0070180">
    <property type="term" value="F:large ribosomal subunit rRNA binding"/>
    <property type="evidence" value="ECO:0000318"/>
    <property type="project" value="GO_Central"/>
</dbReference>
<dbReference type="GO" id="GO:0003735">
    <property type="term" value="F:structural constituent of ribosome"/>
    <property type="evidence" value="ECO:0000318"/>
    <property type="project" value="GO_Central"/>
</dbReference>
<dbReference type="GO" id="GO:0006412">
    <property type="term" value="P:translation"/>
    <property type="evidence" value="ECO:0007669"/>
    <property type="project" value="UniProtKB-UniRule"/>
</dbReference>
<dbReference type="CDD" id="cd00337">
    <property type="entry name" value="Ribosomal_uL14"/>
    <property type="match status" value="1"/>
</dbReference>
<dbReference type="FunFam" id="2.40.150.20:FF:000001">
    <property type="entry name" value="50S ribosomal protein L14"/>
    <property type="match status" value="1"/>
</dbReference>
<dbReference type="Gene3D" id="2.40.150.20">
    <property type="entry name" value="Ribosomal protein L14"/>
    <property type="match status" value="1"/>
</dbReference>
<dbReference type="HAMAP" id="MF_01367">
    <property type="entry name" value="Ribosomal_uL14"/>
    <property type="match status" value="1"/>
</dbReference>
<dbReference type="InterPro" id="IPR000218">
    <property type="entry name" value="Ribosomal_uL14"/>
</dbReference>
<dbReference type="InterPro" id="IPR005745">
    <property type="entry name" value="Ribosomal_uL14_bac-type"/>
</dbReference>
<dbReference type="InterPro" id="IPR019972">
    <property type="entry name" value="Ribosomal_uL14_CS"/>
</dbReference>
<dbReference type="InterPro" id="IPR036853">
    <property type="entry name" value="Ribosomal_uL14_sf"/>
</dbReference>
<dbReference type="NCBIfam" id="TIGR01067">
    <property type="entry name" value="rplN_bact"/>
    <property type="match status" value="1"/>
</dbReference>
<dbReference type="PANTHER" id="PTHR11761">
    <property type="entry name" value="50S/60S RIBOSOMAL PROTEIN L14/L23"/>
    <property type="match status" value="1"/>
</dbReference>
<dbReference type="PANTHER" id="PTHR11761:SF3">
    <property type="entry name" value="LARGE RIBOSOMAL SUBUNIT PROTEIN UL14M"/>
    <property type="match status" value="1"/>
</dbReference>
<dbReference type="Pfam" id="PF00238">
    <property type="entry name" value="Ribosomal_L14"/>
    <property type="match status" value="1"/>
</dbReference>
<dbReference type="SMART" id="SM01374">
    <property type="entry name" value="Ribosomal_L14"/>
    <property type="match status" value="1"/>
</dbReference>
<dbReference type="SUPFAM" id="SSF50193">
    <property type="entry name" value="Ribosomal protein L14"/>
    <property type="match status" value="1"/>
</dbReference>
<dbReference type="PROSITE" id="PS00049">
    <property type="entry name" value="RIBOSOMAL_L14"/>
    <property type="match status" value="1"/>
</dbReference>
<reference key="1">
    <citation type="journal article" date="2016" name="Front. Microbiol.">
        <title>The complete genome sequence of hyperthermophile Dictyoglomus turgidum DSM 6724 reveals a specialized carbohydrate fermentor.</title>
        <authorList>
            <person name="Brumm P.J."/>
            <person name="Gowda K."/>
            <person name="Robb F.T."/>
            <person name="Mead D.A."/>
        </authorList>
    </citation>
    <scope>NUCLEOTIDE SEQUENCE [LARGE SCALE GENOMIC DNA]</scope>
    <source>
        <strain>DSM 6724 / Z-1310</strain>
    </source>
</reference>
<sequence length="120" mass="13299">MIMPQTRLVVADNTGAKEIMCFRILGKKKVAQVGDIIVASVKEAVPRSNIKKGDVVYAVVIRTKRTIKRKDGSCVRFDDNAAVIIDKEGNPRGTRVFGPVARELRDKNFMKIISLATEVI</sequence>
<accession>B8E1E3</accession>
<organism>
    <name type="scientific">Dictyoglomus turgidum (strain DSM 6724 / Z-1310)</name>
    <dbReference type="NCBI Taxonomy" id="515635"/>
    <lineage>
        <taxon>Bacteria</taxon>
        <taxon>Pseudomonadati</taxon>
        <taxon>Dictyoglomota</taxon>
        <taxon>Dictyoglomia</taxon>
        <taxon>Dictyoglomales</taxon>
        <taxon>Dictyoglomaceae</taxon>
        <taxon>Dictyoglomus</taxon>
    </lineage>
</organism>
<feature type="chain" id="PRO_1000144261" description="Large ribosomal subunit protein uL14">
    <location>
        <begin position="1"/>
        <end position="120"/>
    </location>
</feature>
<evidence type="ECO:0000255" key="1">
    <source>
        <dbReference type="HAMAP-Rule" id="MF_01367"/>
    </source>
</evidence>
<evidence type="ECO:0000305" key="2"/>
<proteinExistence type="inferred from homology"/>
<keyword id="KW-1185">Reference proteome</keyword>
<keyword id="KW-0687">Ribonucleoprotein</keyword>
<keyword id="KW-0689">Ribosomal protein</keyword>
<keyword id="KW-0694">RNA-binding</keyword>
<keyword id="KW-0699">rRNA-binding</keyword>
<comment type="function">
    <text evidence="1">Binds to 23S rRNA. Forms part of two intersubunit bridges in the 70S ribosome.</text>
</comment>
<comment type="subunit">
    <text evidence="1">Part of the 50S ribosomal subunit. Forms a cluster with proteins L3 and L19. In the 70S ribosome, L14 and L19 interact and together make contacts with the 16S rRNA in bridges B5 and B8.</text>
</comment>
<comment type="similarity">
    <text evidence="1">Belongs to the universal ribosomal protein uL14 family.</text>
</comment>
<protein>
    <recommendedName>
        <fullName evidence="1">Large ribosomal subunit protein uL14</fullName>
    </recommendedName>
    <alternativeName>
        <fullName evidence="2">50S ribosomal protein L14</fullName>
    </alternativeName>
</protein>
<gene>
    <name evidence="1" type="primary">rplN</name>
    <name type="ordered locus">Dtur_0991</name>
</gene>
<name>RL14_DICTD</name>